<comment type="function">
    <text evidence="4">Serine/threonine-protein kinase which is required for ciliogenesis. Regulates the length and the morphology of sensory neuron cilia. In addition, plays a role in the anterograde intraflagellar transport (IFT) in the cilia by regulating the undocking of kinesin-II motor complex (composed of klp-11, klp-20 and kap-1) before reaching the distal segment and the docking of kinesin motor osm-3 onto IFT cargos.</text>
</comment>
<comment type="catalytic activity">
    <reaction evidence="1">
        <text>L-seryl-[protein] + ATP = O-phospho-L-seryl-[protein] + ADP + H(+)</text>
        <dbReference type="Rhea" id="RHEA:17989"/>
        <dbReference type="Rhea" id="RHEA-COMP:9863"/>
        <dbReference type="Rhea" id="RHEA-COMP:11604"/>
        <dbReference type="ChEBI" id="CHEBI:15378"/>
        <dbReference type="ChEBI" id="CHEBI:29999"/>
        <dbReference type="ChEBI" id="CHEBI:30616"/>
        <dbReference type="ChEBI" id="CHEBI:83421"/>
        <dbReference type="ChEBI" id="CHEBI:456216"/>
        <dbReference type="EC" id="2.7.11.1"/>
    </reaction>
</comment>
<comment type="catalytic activity">
    <reaction evidence="1">
        <text>L-threonyl-[protein] + ATP = O-phospho-L-threonyl-[protein] + ADP + H(+)</text>
        <dbReference type="Rhea" id="RHEA:46608"/>
        <dbReference type="Rhea" id="RHEA-COMP:11060"/>
        <dbReference type="Rhea" id="RHEA-COMP:11605"/>
        <dbReference type="ChEBI" id="CHEBI:15378"/>
        <dbReference type="ChEBI" id="CHEBI:30013"/>
        <dbReference type="ChEBI" id="CHEBI:30616"/>
        <dbReference type="ChEBI" id="CHEBI:61977"/>
        <dbReference type="ChEBI" id="CHEBI:456216"/>
        <dbReference type="EC" id="2.7.11.1"/>
    </reaction>
</comment>
<comment type="cofactor">
    <cofactor evidence="1">
        <name>Mg(2+)</name>
        <dbReference type="ChEBI" id="CHEBI:18420"/>
    </cofactor>
</comment>
<comment type="subcellular location">
    <subcellularLocation>
        <location evidence="4">Perikaryon</location>
    </subcellularLocation>
    <subcellularLocation>
        <location evidence="4">Cell projection</location>
        <location evidence="4">Dendrite</location>
    </subcellularLocation>
    <subcellularLocation>
        <location evidence="4">Cell projection</location>
        <location evidence="4">Axon</location>
    </subcellularLocation>
    <subcellularLocation>
        <location evidence="4">Cell projection</location>
        <location evidence="4">Cilium</location>
    </subcellularLocation>
    <text evidence="4">Enriched at the transition zone between the base of the cilia and the dendrites and to a lesser extent in the cilia.</text>
</comment>
<comment type="alternative products">
    <event type="alternative splicing"/>
    <isoform>
        <id>B3WFY8-1</id>
        <name evidence="9">b</name>
        <sequence type="displayed"/>
    </isoform>
    <isoform>
        <id>B3WFY8-2</id>
        <name evidence="8">a</name>
        <sequence type="described" ref="VSP_058711 VSP_058712"/>
    </isoform>
</comment>
<comment type="tissue specificity">
    <text evidence="4">Expressed in head neurons including amphid and labial sensory neurons and 3 pairs of neurons in the tail including phasmid sensory neurons. In male, expressed in the tail including the sensory rays and the spicule.</text>
</comment>
<comment type="disruption phenotype">
    <text evidence="4">Sensory neuron cilia are longer, not correctly aligned in the amphid channel, more dispersed, misdirected and sometimes turned back towards the transition zone. Abnormal localization of kap-1 along the full cilia length. Abnormal accumulation in the middle of cilia and in the distal segment and reduced speed along the cilium axoneme of components of the IFT machinery kap-1, osm-3, xbx-1, che-11 and osm-5. In a kap-1 mutant background, 30 percent of mutants have branched cilia. In a kap-1 and osm-3 double mutant background, loss of cilia formation.</text>
</comment>
<comment type="similarity">
    <text evidence="5">Belongs to the protein kinase superfamily. CMGC Ser/Thr protein kinase family. RCK subfamily.</text>
</comment>
<dbReference type="EC" id="2.7.11.1" evidence="1"/>
<dbReference type="EMBL" id="AM498742">
    <property type="protein sequence ID" value="CAM58448.1"/>
    <property type="molecule type" value="mRNA"/>
</dbReference>
<dbReference type="EMBL" id="BX284601">
    <property type="protein sequence ID" value="CAB06021.2"/>
    <property type="molecule type" value="Genomic_DNA"/>
</dbReference>
<dbReference type="EMBL" id="BX284601">
    <property type="protein sequence ID" value="CAQ76489.2"/>
    <property type="molecule type" value="Genomic_DNA"/>
</dbReference>
<dbReference type="PIR" id="T23710">
    <property type="entry name" value="T23710"/>
</dbReference>
<dbReference type="RefSeq" id="NP_001129786.2">
    <molecule id="B3WFY8-1"/>
    <property type="nucleotide sequence ID" value="NM_001136314.5"/>
</dbReference>
<dbReference type="RefSeq" id="NP_492493.2">
    <molecule id="B3WFY8-2"/>
    <property type="nucleotide sequence ID" value="NM_060092.4"/>
</dbReference>
<dbReference type="SMR" id="B3WFY8"/>
<dbReference type="FunCoup" id="B3WFY8">
    <property type="interactions" value="473"/>
</dbReference>
<dbReference type="STRING" id="6239.M04C9.5b.1"/>
<dbReference type="PaxDb" id="6239-M04C9.5b"/>
<dbReference type="PeptideAtlas" id="B3WFY8"/>
<dbReference type="EnsemblMetazoa" id="M04C9.5a.1">
    <molecule id="B3WFY8-2"/>
    <property type="protein sequence ID" value="M04C9.5a.1"/>
    <property type="gene ID" value="WBGene00001121"/>
</dbReference>
<dbReference type="EnsemblMetazoa" id="M04C9.5b.1">
    <molecule id="B3WFY8-1"/>
    <property type="protein sequence ID" value="M04C9.5b.1"/>
    <property type="gene ID" value="WBGene00001121"/>
</dbReference>
<dbReference type="GeneID" id="187442"/>
<dbReference type="KEGG" id="cel:CELE_M04C9.5"/>
<dbReference type="AGR" id="WB:WBGene00001121"/>
<dbReference type="CTD" id="187442"/>
<dbReference type="WormBase" id="M04C9.5a">
    <molecule id="B3WFY8-2"/>
    <property type="protein sequence ID" value="CE40815"/>
    <property type="gene ID" value="WBGene00001121"/>
    <property type="gene designation" value="dyf-5"/>
</dbReference>
<dbReference type="WormBase" id="M04C9.5b">
    <molecule id="B3WFY8-1"/>
    <property type="protein sequence ID" value="CE46107"/>
    <property type="gene ID" value="WBGene00001121"/>
    <property type="gene designation" value="dyf-5"/>
</dbReference>
<dbReference type="eggNOG" id="KOG0661">
    <property type="taxonomic scope" value="Eukaryota"/>
</dbReference>
<dbReference type="GeneTree" id="ENSGT00940000156581"/>
<dbReference type="InParanoid" id="B3WFY8"/>
<dbReference type="OMA" id="AMNFRFQ"/>
<dbReference type="OrthoDB" id="2158884at2759"/>
<dbReference type="PhylomeDB" id="B3WFY8"/>
<dbReference type="PRO" id="PR:B3WFY8"/>
<dbReference type="Proteomes" id="UP000001940">
    <property type="component" value="Chromosome I"/>
</dbReference>
<dbReference type="Bgee" id="WBGene00001121">
    <property type="expression patterns" value="Expressed in pharyngeal muscle cell (C elegans) and 3 other cell types or tissues"/>
</dbReference>
<dbReference type="GO" id="GO:0030424">
    <property type="term" value="C:axon"/>
    <property type="evidence" value="ECO:0000314"/>
    <property type="project" value="WormBase"/>
</dbReference>
<dbReference type="GO" id="GO:0005929">
    <property type="term" value="C:cilium"/>
    <property type="evidence" value="ECO:0000318"/>
    <property type="project" value="GO_Central"/>
</dbReference>
<dbReference type="GO" id="GO:0005737">
    <property type="term" value="C:cytoplasm"/>
    <property type="evidence" value="ECO:0000318"/>
    <property type="project" value="GO_Central"/>
</dbReference>
<dbReference type="GO" id="GO:0030425">
    <property type="term" value="C:dendrite"/>
    <property type="evidence" value="ECO:0000314"/>
    <property type="project" value="WormBase"/>
</dbReference>
<dbReference type="GO" id="GO:0043025">
    <property type="term" value="C:neuronal cell body"/>
    <property type="evidence" value="ECO:0000314"/>
    <property type="project" value="WormBase"/>
</dbReference>
<dbReference type="GO" id="GO:0097730">
    <property type="term" value="C:non-motile cilium"/>
    <property type="evidence" value="ECO:0000314"/>
    <property type="project" value="WormBase"/>
</dbReference>
<dbReference type="GO" id="GO:0005634">
    <property type="term" value="C:nucleus"/>
    <property type="evidence" value="ECO:0000318"/>
    <property type="project" value="GO_Central"/>
</dbReference>
<dbReference type="GO" id="GO:0043204">
    <property type="term" value="C:perikaryon"/>
    <property type="evidence" value="ECO:0007669"/>
    <property type="project" value="UniProtKB-SubCell"/>
</dbReference>
<dbReference type="GO" id="GO:0005524">
    <property type="term" value="F:ATP binding"/>
    <property type="evidence" value="ECO:0000250"/>
    <property type="project" value="WormBase"/>
</dbReference>
<dbReference type="GO" id="GO:0004707">
    <property type="term" value="F:MAP kinase activity"/>
    <property type="evidence" value="ECO:0000250"/>
    <property type="project" value="WormBase"/>
</dbReference>
<dbReference type="GO" id="GO:0046872">
    <property type="term" value="F:metal ion binding"/>
    <property type="evidence" value="ECO:0007669"/>
    <property type="project" value="UniProtKB-KW"/>
</dbReference>
<dbReference type="GO" id="GO:0106310">
    <property type="term" value="F:protein serine kinase activity"/>
    <property type="evidence" value="ECO:0007669"/>
    <property type="project" value="RHEA"/>
</dbReference>
<dbReference type="GO" id="GO:0004674">
    <property type="term" value="F:protein serine/threonine kinase activity"/>
    <property type="evidence" value="ECO:0000314"/>
    <property type="project" value="WormBase"/>
</dbReference>
<dbReference type="GO" id="GO:0060271">
    <property type="term" value="P:cilium assembly"/>
    <property type="evidence" value="ECO:0000318"/>
    <property type="project" value="GO_Central"/>
</dbReference>
<dbReference type="GO" id="GO:0035556">
    <property type="term" value="P:intracellular signal transduction"/>
    <property type="evidence" value="ECO:0000318"/>
    <property type="project" value="GO_Central"/>
</dbReference>
<dbReference type="GO" id="GO:0035720">
    <property type="term" value="P:intraciliary anterograde transport"/>
    <property type="evidence" value="ECO:0000315"/>
    <property type="project" value="UniProtKB"/>
</dbReference>
<dbReference type="GO" id="GO:0042073">
    <property type="term" value="P:intraciliary transport"/>
    <property type="evidence" value="ECO:0000314"/>
    <property type="project" value="WormBase"/>
</dbReference>
<dbReference type="GO" id="GO:1902856">
    <property type="term" value="P:negative regulation of non-motile cilium assembly"/>
    <property type="evidence" value="ECO:0000316"/>
    <property type="project" value="UniProtKB"/>
</dbReference>
<dbReference type="GO" id="GO:1905515">
    <property type="term" value="P:non-motile cilium assembly"/>
    <property type="evidence" value="ECO:0000315"/>
    <property type="project" value="WormBase"/>
</dbReference>
<dbReference type="GO" id="GO:1902857">
    <property type="term" value="P:positive regulation of non-motile cilium assembly"/>
    <property type="evidence" value="ECO:0000316"/>
    <property type="project" value="UniProtKB"/>
</dbReference>
<dbReference type="GO" id="GO:0008104">
    <property type="term" value="P:protein localization"/>
    <property type="evidence" value="ECO:0000315"/>
    <property type="project" value="WormBase"/>
</dbReference>
<dbReference type="CDD" id="cd07830">
    <property type="entry name" value="STKc_MAK_like"/>
    <property type="match status" value="1"/>
</dbReference>
<dbReference type="FunFam" id="1.10.510.10:FF:000685">
    <property type="entry name" value="Serine/threonine-protein kinase dyf-5"/>
    <property type="match status" value="1"/>
</dbReference>
<dbReference type="FunFam" id="3.30.200.20:FF:000071">
    <property type="entry name" value="serine/threonine-protein kinase MAK isoform X1"/>
    <property type="match status" value="1"/>
</dbReference>
<dbReference type="Gene3D" id="3.30.200.20">
    <property type="entry name" value="Phosphorylase Kinase, domain 1"/>
    <property type="match status" value="1"/>
</dbReference>
<dbReference type="Gene3D" id="1.10.510.10">
    <property type="entry name" value="Transferase(Phosphotransferase) domain 1"/>
    <property type="match status" value="1"/>
</dbReference>
<dbReference type="InterPro" id="IPR011009">
    <property type="entry name" value="Kinase-like_dom_sf"/>
</dbReference>
<dbReference type="InterPro" id="IPR050117">
    <property type="entry name" value="MAP_kinase"/>
</dbReference>
<dbReference type="InterPro" id="IPR000719">
    <property type="entry name" value="Prot_kinase_dom"/>
</dbReference>
<dbReference type="InterPro" id="IPR017441">
    <property type="entry name" value="Protein_kinase_ATP_BS"/>
</dbReference>
<dbReference type="InterPro" id="IPR008271">
    <property type="entry name" value="Ser/Thr_kinase_AS"/>
</dbReference>
<dbReference type="PANTHER" id="PTHR24055">
    <property type="entry name" value="MITOGEN-ACTIVATED PROTEIN KINASE"/>
    <property type="match status" value="1"/>
</dbReference>
<dbReference type="Pfam" id="PF00069">
    <property type="entry name" value="Pkinase"/>
    <property type="match status" value="1"/>
</dbReference>
<dbReference type="SMART" id="SM00220">
    <property type="entry name" value="S_TKc"/>
    <property type="match status" value="1"/>
</dbReference>
<dbReference type="SUPFAM" id="SSF56112">
    <property type="entry name" value="Protein kinase-like (PK-like)"/>
    <property type="match status" value="1"/>
</dbReference>
<dbReference type="PROSITE" id="PS00107">
    <property type="entry name" value="PROTEIN_KINASE_ATP"/>
    <property type="match status" value="1"/>
</dbReference>
<dbReference type="PROSITE" id="PS50011">
    <property type="entry name" value="PROTEIN_KINASE_DOM"/>
    <property type="match status" value="1"/>
</dbReference>
<dbReference type="PROSITE" id="PS00108">
    <property type="entry name" value="PROTEIN_KINASE_ST"/>
    <property type="match status" value="1"/>
</dbReference>
<gene>
    <name evidence="9" type="primary">dyf-5</name>
    <name evidence="9" type="ORF">M04C9.5</name>
</gene>
<evidence type="ECO:0000250" key="1">
    <source>
        <dbReference type="UniProtKB" id="Q9JKV2"/>
    </source>
</evidence>
<evidence type="ECO:0000255" key="2">
    <source>
        <dbReference type="PROSITE-ProRule" id="PRU00159"/>
    </source>
</evidence>
<evidence type="ECO:0000256" key="3">
    <source>
        <dbReference type="SAM" id="MobiDB-lite"/>
    </source>
</evidence>
<evidence type="ECO:0000269" key="4">
    <source>
    </source>
</evidence>
<evidence type="ECO:0000305" key="5"/>
<evidence type="ECO:0000312" key="6">
    <source>
        <dbReference type="EMBL" id="CAM58448.1"/>
    </source>
</evidence>
<evidence type="ECO:0000312" key="7">
    <source>
        <dbReference type="Proteomes" id="UP000001940"/>
    </source>
</evidence>
<evidence type="ECO:0000312" key="8">
    <source>
        <dbReference type="WormBase" id="M04C9.5a"/>
    </source>
</evidence>
<evidence type="ECO:0000312" key="9">
    <source>
        <dbReference type="WormBase" id="M04C9.5b"/>
    </source>
</evidence>
<protein>
    <recommendedName>
        <fullName evidence="5">Serine/threonine-protein kinase dyf-5</fullName>
        <ecNumber evidence="1">2.7.11.1</ecNumber>
    </recommendedName>
</protein>
<proteinExistence type="evidence at transcript level"/>
<reference evidence="6" key="1">
    <citation type="journal article" date="2007" name="Proc. Natl. Acad. Sci. U.S.A.">
        <title>Mutation of the MAP kinase DYF-5 affects docking and undocking of kinesin-2 motors and reduces their speed in the cilia of Caenorhabditis elegans.</title>
        <authorList>
            <person name="Burghoorn J."/>
            <person name="Dekkers M.P."/>
            <person name="Rademakers S."/>
            <person name="de Jong T."/>
            <person name="Willemsen R."/>
            <person name="Jansen G."/>
        </authorList>
    </citation>
    <scope>NUCLEOTIDE SEQUENCE [MRNA] (ISOFORM A)</scope>
    <scope>FUNCTION</scope>
    <scope>SUBCELLULAR LOCATION</scope>
    <scope>TISSUE SPECIFICITY</scope>
    <scope>DISRUPTION PHENOTYPE</scope>
    <source>
        <strain evidence="6">Bristol N2</strain>
    </source>
</reference>
<reference evidence="7" key="2">
    <citation type="journal article" date="1998" name="Science">
        <title>Genome sequence of the nematode C. elegans: a platform for investigating biology.</title>
        <authorList>
            <consortium name="The C. elegans sequencing consortium"/>
        </authorList>
    </citation>
    <scope>NUCLEOTIDE SEQUENCE [LARGE SCALE GENOMIC DNA]</scope>
    <source>
        <strain evidence="7">Bristol N2</strain>
    </source>
</reference>
<name>DYF5_CAEEL</name>
<sequence>MSSAVKLADRYLMTKRLGDGTFGEVMLAKKIDTGDRVAIKRMKKKFYSWEEAMSLREVKSLKKLNHPNIIKLREVIRENDILYFVFEFMQENLYELMKDRDRYFPESVIRNIIYQVLQGLAFMHKNGFFHRDMKPENIMCNGTELVKIADFGLAREIRSKPPYTDYVSTRWYRAPEILLRSTSYNSPIDMWALGCIMAELYILRPLFPGTSEMDQLFKIISILGTPNKDEWPEGYQLASAMNFRFQQVVATPMEQVVNTISKEGMKLMMDMMLWNPEKRPNANQSLRYKYFQVAEKLGAPVVSQPAPGSIRKTSAASVKSDTKAMTAKAAKKDYIGSENVSPQQPAKVIDRHINRNLPLNKETLFEKSDNKPLGPTKSNEAKPTAKEIYLSKSKYVPGQVSKDTHQNQIMTTNGLTGTTKTTTFSAKKEGRTAVQTRFEYAYGYIPSFGARQTGPTVSNQTNNHSANNSHSPNKMSNTGRVDWAAKYVK</sequence>
<organism evidence="7">
    <name type="scientific">Caenorhabditis elegans</name>
    <dbReference type="NCBI Taxonomy" id="6239"/>
    <lineage>
        <taxon>Eukaryota</taxon>
        <taxon>Metazoa</taxon>
        <taxon>Ecdysozoa</taxon>
        <taxon>Nematoda</taxon>
        <taxon>Chromadorea</taxon>
        <taxon>Rhabditida</taxon>
        <taxon>Rhabditina</taxon>
        <taxon>Rhabditomorpha</taxon>
        <taxon>Rhabditoidea</taxon>
        <taxon>Rhabditidae</taxon>
        <taxon>Peloderinae</taxon>
        <taxon>Caenorhabditis</taxon>
    </lineage>
</organism>
<accession>B3WFY8</accession>
<accession>G5EG21</accession>
<feature type="chain" id="PRO_0000438690" description="Serine/threonine-protein kinase dyf-5">
    <location>
        <begin position="1"/>
        <end position="489"/>
    </location>
</feature>
<feature type="domain" description="Protein kinase" evidence="2">
    <location>
        <begin position="11"/>
        <end position="291"/>
    </location>
</feature>
<feature type="region of interest" description="Disordered" evidence="3">
    <location>
        <begin position="366"/>
        <end position="385"/>
    </location>
</feature>
<feature type="region of interest" description="Disordered" evidence="3">
    <location>
        <begin position="452"/>
        <end position="489"/>
    </location>
</feature>
<feature type="compositionally biased region" description="Low complexity" evidence="3">
    <location>
        <begin position="458"/>
        <end position="473"/>
    </location>
</feature>
<feature type="active site" description="Proton acceptor" evidence="2">
    <location>
        <position position="132"/>
    </location>
</feature>
<feature type="binding site" evidence="2">
    <location>
        <begin position="17"/>
        <end position="25"/>
    </location>
    <ligand>
        <name>ATP</name>
        <dbReference type="ChEBI" id="CHEBI:30616"/>
    </ligand>
</feature>
<feature type="binding site" evidence="2">
    <location>
        <position position="40"/>
    </location>
    <ligand>
        <name>ATP</name>
        <dbReference type="ChEBI" id="CHEBI:30616"/>
    </ligand>
</feature>
<feature type="splice variant" id="VSP_058711" description="In isoform a." evidence="5">
    <original>YIPSFGARQTGPTVSNQTNNHSANNSHS</original>
    <variation>SSFCSSHKSLFLFVFLLPFGACLSSQYS</variation>
    <location>
        <begin position="444"/>
        <end position="471"/>
    </location>
</feature>
<feature type="splice variant" id="VSP_058712" description="In isoform a." evidence="5">
    <location>
        <begin position="472"/>
        <end position="489"/>
    </location>
</feature>
<keyword id="KW-0025">Alternative splicing</keyword>
<keyword id="KW-0067">ATP-binding</keyword>
<keyword id="KW-0966">Cell projection</keyword>
<keyword id="KW-0969">Cilium</keyword>
<keyword id="KW-0970">Cilium biogenesis/degradation</keyword>
<keyword id="KW-0418">Kinase</keyword>
<keyword id="KW-0460">Magnesium</keyword>
<keyword id="KW-0479">Metal-binding</keyword>
<keyword id="KW-0547">Nucleotide-binding</keyword>
<keyword id="KW-1185">Reference proteome</keyword>
<keyword id="KW-0723">Serine/threonine-protein kinase</keyword>
<keyword id="KW-0808">Transferase</keyword>